<comment type="function">
    <text evidence="1">Protease-inhibitor that contains multiple distinct protease inhibitor domains. Probably has serine protease- and metalloprotease-inhibitor activity (By similarity).</text>
</comment>
<comment type="subcellular location">
    <subcellularLocation>
        <location evidence="1">Secreted</location>
    </subcellularLocation>
</comment>
<comment type="alternative products">
    <event type="alternative splicing"/>
    <isoform>
        <id>Q6NUX0-1</id>
        <name>1</name>
        <sequence type="displayed"/>
    </isoform>
    <isoform>
        <id>Q6NUX0-2</id>
        <name>2</name>
        <sequence type="described" ref="VSP_028838"/>
    </isoform>
</comment>
<comment type="similarity">
    <text evidence="9">Belongs to the WFIKKN family.</text>
</comment>
<comment type="sequence caution" evidence="9">
    <conflict type="erroneous initiation">
        <sequence resource="EMBL-CDS" id="AAH68412"/>
    </conflict>
</comment>
<evidence type="ECO:0000250" key="1"/>
<evidence type="ECO:0000255" key="2"/>
<evidence type="ECO:0000255" key="3">
    <source>
        <dbReference type="PROSITE-ProRule" id="PRU00031"/>
    </source>
</evidence>
<evidence type="ECO:0000255" key="4">
    <source>
        <dbReference type="PROSITE-ProRule" id="PRU00295"/>
    </source>
</evidence>
<evidence type="ECO:0000255" key="5">
    <source>
        <dbReference type="PROSITE-ProRule" id="PRU00722"/>
    </source>
</evidence>
<evidence type="ECO:0000255" key="6">
    <source>
        <dbReference type="PROSITE-ProRule" id="PRU00798"/>
    </source>
</evidence>
<evidence type="ECO:0000256" key="7">
    <source>
        <dbReference type="SAM" id="MobiDB-lite"/>
    </source>
</evidence>
<evidence type="ECO:0000303" key="8">
    <source ref="1"/>
</evidence>
<evidence type="ECO:0000305" key="9"/>
<accession>Q6NUX0</accession>
<accession>Q6NUV7</accession>
<dbReference type="EMBL" id="BC068398">
    <property type="protein sequence ID" value="AAH68398.1"/>
    <property type="molecule type" value="mRNA"/>
</dbReference>
<dbReference type="EMBL" id="BC068412">
    <property type="protein sequence ID" value="AAH68412.1"/>
    <property type="status" value="ALT_INIT"/>
    <property type="molecule type" value="mRNA"/>
</dbReference>
<dbReference type="RefSeq" id="NP_999912.1">
    <molecule id="Q6NUX0-1"/>
    <property type="nucleotide sequence ID" value="NM_214747.1"/>
</dbReference>
<dbReference type="SMR" id="Q6NUX0"/>
<dbReference type="FunCoup" id="Q6NUX0">
    <property type="interactions" value="224"/>
</dbReference>
<dbReference type="STRING" id="7955.ENSDARP00000137431"/>
<dbReference type="MEROPS" id="I02.955"/>
<dbReference type="GlyCosmos" id="Q6NUX0">
    <property type="glycosylation" value="1 site, No reported glycans"/>
</dbReference>
<dbReference type="PaxDb" id="7955-ENSDARP00000098282"/>
<dbReference type="GeneID" id="406570"/>
<dbReference type="KEGG" id="dre:406570"/>
<dbReference type="AGR" id="ZFIN:ZDB-GENE-040426-2465"/>
<dbReference type="CTD" id="117166"/>
<dbReference type="ZFIN" id="ZDB-GENE-040426-2465">
    <property type="gene designation" value="wfikkn1"/>
</dbReference>
<dbReference type="eggNOG" id="KOG4597">
    <property type="taxonomic scope" value="Eukaryota"/>
</dbReference>
<dbReference type="InParanoid" id="Q6NUX0"/>
<dbReference type="OrthoDB" id="8187079at2759"/>
<dbReference type="PhylomeDB" id="Q6NUX0"/>
<dbReference type="PRO" id="PR:Q6NUX0"/>
<dbReference type="Proteomes" id="UP000000437">
    <property type="component" value="Chromosome 1"/>
</dbReference>
<dbReference type="GO" id="GO:0005615">
    <property type="term" value="C:extracellular space"/>
    <property type="evidence" value="ECO:0000318"/>
    <property type="project" value="GO_Central"/>
</dbReference>
<dbReference type="GO" id="GO:0048019">
    <property type="term" value="F:receptor antagonist activity"/>
    <property type="evidence" value="ECO:0000318"/>
    <property type="project" value="GO_Central"/>
</dbReference>
<dbReference type="GO" id="GO:0004867">
    <property type="term" value="F:serine-type endopeptidase inhibitor activity"/>
    <property type="evidence" value="ECO:0007669"/>
    <property type="project" value="UniProtKB-KW"/>
</dbReference>
<dbReference type="GO" id="GO:0050431">
    <property type="term" value="F:transforming growth factor beta binding"/>
    <property type="evidence" value="ECO:0000318"/>
    <property type="project" value="GO_Central"/>
</dbReference>
<dbReference type="GO" id="GO:0007179">
    <property type="term" value="P:transforming growth factor beta receptor signaling pathway"/>
    <property type="evidence" value="ECO:0000318"/>
    <property type="project" value="GO_Central"/>
</dbReference>
<dbReference type="CDD" id="cd00104">
    <property type="entry name" value="KAZAL_FS"/>
    <property type="match status" value="1"/>
</dbReference>
<dbReference type="CDD" id="cd22605">
    <property type="entry name" value="Kunitz_WFIKKN_1-like"/>
    <property type="match status" value="1"/>
</dbReference>
<dbReference type="CDD" id="cd22606">
    <property type="entry name" value="Kunitz_WFIKKN_2-like"/>
    <property type="match status" value="1"/>
</dbReference>
<dbReference type="CDD" id="cd03575">
    <property type="entry name" value="NTR_WFIKKN"/>
    <property type="match status" value="1"/>
</dbReference>
<dbReference type="FunFam" id="4.10.410.10:FF:000002">
    <property type="entry name" value="WAP, follistatin/kazal, immunoglobulin, kunitz and netrin domain-containing 2"/>
    <property type="match status" value="1"/>
</dbReference>
<dbReference type="FunFam" id="2.60.40.10:FF:000473">
    <property type="entry name" value="WAP, Kazal, immunoglobulin, Kunitz and NTR domain-containing protein 2"/>
    <property type="match status" value="1"/>
</dbReference>
<dbReference type="FunFam" id="3.30.60.30:FF:000014">
    <property type="entry name" value="WAP, Kazal, immunoglobulin, Kunitz and NTR domain-containing protein 2"/>
    <property type="match status" value="1"/>
</dbReference>
<dbReference type="FunFam" id="4.10.75.10:FF:000002">
    <property type="entry name" value="WAP, Kazal, immunoglobulin, Kunitz and NTR domain-containing protein 2"/>
    <property type="match status" value="1"/>
</dbReference>
<dbReference type="Gene3D" id="2.40.50.120">
    <property type="match status" value="1"/>
</dbReference>
<dbReference type="Gene3D" id="3.30.60.30">
    <property type="match status" value="1"/>
</dbReference>
<dbReference type="Gene3D" id="4.10.75.10">
    <property type="entry name" value="Elafin-like"/>
    <property type="match status" value="1"/>
</dbReference>
<dbReference type="Gene3D" id="2.60.40.10">
    <property type="entry name" value="Immunoglobulins"/>
    <property type="match status" value="1"/>
</dbReference>
<dbReference type="Gene3D" id="4.10.410.10">
    <property type="entry name" value="Pancreatic trypsin inhibitor Kunitz domain"/>
    <property type="match status" value="2"/>
</dbReference>
<dbReference type="InterPro" id="IPR036645">
    <property type="entry name" value="Elafin-like_sf"/>
</dbReference>
<dbReference type="InterPro" id="IPR007110">
    <property type="entry name" value="Ig-like_dom"/>
</dbReference>
<dbReference type="InterPro" id="IPR036179">
    <property type="entry name" value="Ig-like_dom_sf"/>
</dbReference>
<dbReference type="InterPro" id="IPR013783">
    <property type="entry name" value="Ig-like_fold"/>
</dbReference>
<dbReference type="InterPro" id="IPR013098">
    <property type="entry name" value="Ig_I-set"/>
</dbReference>
<dbReference type="InterPro" id="IPR003599">
    <property type="entry name" value="Ig_sub"/>
</dbReference>
<dbReference type="InterPro" id="IPR003598">
    <property type="entry name" value="Ig_sub2"/>
</dbReference>
<dbReference type="InterPro" id="IPR002350">
    <property type="entry name" value="Kazal_dom"/>
</dbReference>
<dbReference type="InterPro" id="IPR036058">
    <property type="entry name" value="Kazal_dom_sf"/>
</dbReference>
<dbReference type="InterPro" id="IPR002223">
    <property type="entry name" value="Kunitz_BPTI"/>
</dbReference>
<dbReference type="InterPro" id="IPR036880">
    <property type="entry name" value="Kunitz_BPTI_sf"/>
</dbReference>
<dbReference type="InterPro" id="IPR001134">
    <property type="entry name" value="Netrin_domain"/>
</dbReference>
<dbReference type="InterPro" id="IPR018933">
    <property type="entry name" value="Netrin_module_non-TIMP"/>
</dbReference>
<dbReference type="InterPro" id="IPR020901">
    <property type="entry name" value="Prtase_inh_Kunz-CS"/>
</dbReference>
<dbReference type="InterPro" id="IPR008993">
    <property type="entry name" value="TIMP-like_OB-fold"/>
</dbReference>
<dbReference type="InterPro" id="IPR008197">
    <property type="entry name" value="WAP_dom"/>
</dbReference>
<dbReference type="PANTHER" id="PTHR45938">
    <property type="entry name" value="ACP24A4-RELATED"/>
    <property type="match status" value="1"/>
</dbReference>
<dbReference type="PANTHER" id="PTHR45938:SF6">
    <property type="entry name" value="WAP, KAZAL, IMMUNOGLOBULIN, KUNITZ AND NTR DOMAIN-CONTAINING PROTEIN 1"/>
    <property type="match status" value="1"/>
</dbReference>
<dbReference type="Pfam" id="PF07679">
    <property type="entry name" value="I-set"/>
    <property type="match status" value="1"/>
</dbReference>
<dbReference type="Pfam" id="PF00014">
    <property type="entry name" value="Kunitz_BPTI"/>
    <property type="match status" value="2"/>
</dbReference>
<dbReference type="Pfam" id="PF01759">
    <property type="entry name" value="NTR"/>
    <property type="match status" value="1"/>
</dbReference>
<dbReference type="Pfam" id="PF00095">
    <property type="entry name" value="WAP"/>
    <property type="match status" value="1"/>
</dbReference>
<dbReference type="PRINTS" id="PR00759">
    <property type="entry name" value="BASICPTASE"/>
</dbReference>
<dbReference type="SMART" id="SM00409">
    <property type="entry name" value="IG"/>
    <property type="match status" value="1"/>
</dbReference>
<dbReference type="SMART" id="SM00408">
    <property type="entry name" value="IGc2"/>
    <property type="match status" value="1"/>
</dbReference>
<dbReference type="SMART" id="SM00131">
    <property type="entry name" value="KU"/>
    <property type="match status" value="2"/>
</dbReference>
<dbReference type="SMART" id="SM00217">
    <property type="entry name" value="WAP"/>
    <property type="match status" value="1"/>
</dbReference>
<dbReference type="SUPFAM" id="SSF57362">
    <property type="entry name" value="BPTI-like"/>
    <property type="match status" value="2"/>
</dbReference>
<dbReference type="SUPFAM" id="SSF57256">
    <property type="entry name" value="Elafin-like"/>
    <property type="match status" value="1"/>
</dbReference>
<dbReference type="SUPFAM" id="SSF48726">
    <property type="entry name" value="Immunoglobulin"/>
    <property type="match status" value="1"/>
</dbReference>
<dbReference type="SUPFAM" id="SSF100895">
    <property type="entry name" value="Kazal-type serine protease inhibitors"/>
    <property type="match status" value="1"/>
</dbReference>
<dbReference type="SUPFAM" id="SSF50242">
    <property type="entry name" value="TIMP-like"/>
    <property type="match status" value="1"/>
</dbReference>
<dbReference type="PROSITE" id="PS00280">
    <property type="entry name" value="BPTI_KUNITZ_1"/>
    <property type="match status" value="1"/>
</dbReference>
<dbReference type="PROSITE" id="PS50279">
    <property type="entry name" value="BPTI_KUNITZ_2"/>
    <property type="match status" value="2"/>
</dbReference>
<dbReference type="PROSITE" id="PS50835">
    <property type="entry name" value="IG_LIKE"/>
    <property type="match status" value="1"/>
</dbReference>
<dbReference type="PROSITE" id="PS51465">
    <property type="entry name" value="KAZAL_2"/>
    <property type="match status" value="1"/>
</dbReference>
<dbReference type="PROSITE" id="PS50189">
    <property type="entry name" value="NTR"/>
    <property type="match status" value="1"/>
</dbReference>
<dbReference type="PROSITE" id="PS51390">
    <property type="entry name" value="WAP"/>
    <property type="match status" value="1"/>
</dbReference>
<proteinExistence type="evidence at transcript level"/>
<protein>
    <recommendedName>
        <fullName>WAP, Kazal, immunoglobulin, Kunitz and NTR domain-containing protein</fullName>
    </recommendedName>
</protein>
<name>WFKN_DANRE</name>
<gene>
    <name type="primary">wfikkn</name>
    <name type="ORF">zgc:85816</name>
</gene>
<keyword id="KW-0025">Alternative splicing</keyword>
<keyword id="KW-1015">Disulfide bond</keyword>
<keyword id="KW-0325">Glycoprotein</keyword>
<keyword id="KW-0393">Immunoglobulin domain</keyword>
<keyword id="KW-0481">Metalloenzyme inhibitor</keyword>
<keyword id="KW-0483">Metalloprotease inhibitor</keyword>
<keyword id="KW-0646">Protease inhibitor</keyword>
<keyword id="KW-1185">Reference proteome</keyword>
<keyword id="KW-0677">Repeat</keyword>
<keyword id="KW-0964">Secreted</keyword>
<keyword id="KW-0722">Serine protease inhibitor</keyword>
<keyword id="KW-0732">Signal</keyword>
<organism>
    <name type="scientific">Danio rerio</name>
    <name type="common">Zebrafish</name>
    <name type="synonym">Brachydanio rerio</name>
    <dbReference type="NCBI Taxonomy" id="7955"/>
    <lineage>
        <taxon>Eukaryota</taxon>
        <taxon>Metazoa</taxon>
        <taxon>Chordata</taxon>
        <taxon>Craniata</taxon>
        <taxon>Vertebrata</taxon>
        <taxon>Euteleostomi</taxon>
        <taxon>Actinopterygii</taxon>
        <taxon>Neopterygii</taxon>
        <taxon>Teleostei</taxon>
        <taxon>Ostariophysi</taxon>
        <taxon>Cypriniformes</taxon>
        <taxon>Danionidae</taxon>
        <taxon>Danioninae</taxon>
        <taxon>Danio</taxon>
    </lineage>
</organism>
<sequence length="558" mass="61154">MHSSALLVLLCLWPAAALGPSDADHAGVCPNQLNLHLWVDAQSTCERECHSDQDCSSSEKCCTNVCGLLSCVASRVSDGSSEGQWAAGGSGGSAVSCEGFECRQQGAVCELWEGQPVCKCQDLCGSEPSFTCASDGLTYFNRCYMDAEACLQGVELSEVTCRFHLSSPNSSPLPQDPTPPPAPTDADTQTSAPTLYSSPQQQVTYLGGTVSFHCDVIGQPKPEVTWEKQSDEQEQVVMRADQMFGNVVITSIGQLVVYNAQVWDSGIYSCVARNSAGVLRADFSLSVVSHADQDFFDDPAAGLPLGRPFSPADCSAAVERGDCGEKRVDWFFDPARGSCHTFTHGGCEGRNRFHTFEECRASCQREGQAVCSLPAVQGPCRHWQARWFYNSLTERCEAFLYGGCSGNKNSFGTRRECDAHCPTHRPRPCRSCRHRGRIMDTLCSSDFAIVGQLTELIQELDSGMARFHLQQVLRDEKMGLQLFRTQHLEVLLPQVDWSCPCPNITQLQLPLLVMGVVQDGAAILLPHSYARPVSERRLMKIHEALDKNICGTLRRLQD</sequence>
<reference key="1">
    <citation type="submission" date="2004-04" db="EMBL/GenBank/DDBJ databases">
        <authorList>
            <consortium name="NIH - Zebrafish Gene Collection (ZGC) project"/>
        </authorList>
    </citation>
    <scope>NUCLEOTIDE SEQUENCE [LARGE SCALE MRNA] (ISOFORMS 1 AND 2)</scope>
    <source>
        <tissue>Embryo</tissue>
    </source>
</reference>
<feature type="signal peptide" evidence="2">
    <location>
        <begin position="1"/>
        <end position="17"/>
    </location>
</feature>
<feature type="chain" id="PRO_0000307822" description="WAP, Kazal, immunoglobulin, Kunitz and NTR domain-containing protein">
    <location>
        <begin position="18"/>
        <end position="558"/>
    </location>
</feature>
<feature type="domain" description="WAP" evidence="5">
    <location>
        <begin position="22"/>
        <end position="75"/>
    </location>
</feature>
<feature type="domain" description="Kazal-like" evidence="6">
    <location>
        <begin position="114"/>
        <end position="163"/>
    </location>
</feature>
<feature type="domain" description="Ig-like C2-type">
    <location>
        <begin position="193"/>
        <end position="286"/>
    </location>
</feature>
<feature type="domain" description="BPTI/Kunitz inhibitor 1" evidence="3">
    <location>
        <begin position="314"/>
        <end position="363"/>
    </location>
</feature>
<feature type="domain" description="BPTI/Kunitz inhibitor 2" evidence="3">
    <location>
        <begin position="371"/>
        <end position="421"/>
    </location>
</feature>
<feature type="domain" description="NTR" evidence="4">
    <location>
        <begin position="421"/>
        <end position="550"/>
    </location>
</feature>
<feature type="region of interest" description="Disordered" evidence="7">
    <location>
        <begin position="167"/>
        <end position="194"/>
    </location>
</feature>
<feature type="compositionally biased region" description="Pro residues" evidence="7">
    <location>
        <begin position="174"/>
        <end position="183"/>
    </location>
</feature>
<feature type="compositionally biased region" description="Low complexity" evidence="7">
    <location>
        <begin position="184"/>
        <end position="194"/>
    </location>
</feature>
<feature type="glycosylation site" description="N-linked (GlcNAc...) asparagine" evidence="2">
    <location>
        <position position="503"/>
    </location>
</feature>
<feature type="disulfide bond" evidence="1">
    <location>
        <begin position="29"/>
        <end position="62"/>
    </location>
</feature>
<feature type="disulfide bond" evidence="1">
    <location>
        <begin position="45"/>
        <end position="66"/>
    </location>
</feature>
<feature type="disulfide bond" evidence="1">
    <location>
        <begin position="49"/>
        <end position="61"/>
    </location>
</feature>
<feature type="disulfide bond" evidence="1">
    <location>
        <begin position="55"/>
        <end position="71"/>
    </location>
</feature>
<feature type="disulfide bond" evidence="1">
    <location>
        <begin position="120"/>
        <end position="150"/>
    </location>
</feature>
<feature type="disulfide bond" evidence="1">
    <location>
        <begin position="124"/>
        <end position="143"/>
    </location>
</feature>
<feature type="disulfide bond" evidence="1">
    <location>
        <begin position="132"/>
        <end position="161"/>
    </location>
</feature>
<feature type="disulfide bond" evidence="1">
    <location>
        <begin position="214"/>
        <end position="270"/>
    </location>
</feature>
<feature type="disulfide bond" evidence="1">
    <location>
        <begin position="314"/>
        <end position="363"/>
    </location>
</feature>
<feature type="disulfide bond" evidence="1">
    <location>
        <begin position="323"/>
        <end position="347"/>
    </location>
</feature>
<feature type="disulfide bond" evidence="1">
    <location>
        <begin position="339"/>
        <end position="359"/>
    </location>
</feature>
<feature type="disulfide bond" evidence="1">
    <location>
        <begin position="371"/>
        <end position="421"/>
    </location>
</feature>
<feature type="disulfide bond" evidence="1">
    <location>
        <begin position="380"/>
        <end position="404"/>
    </location>
</feature>
<feature type="disulfide bond" evidence="1">
    <location>
        <begin position="396"/>
        <end position="417"/>
    </location>
</feature>
<feature type="disulfide bond" evidence="1">
    <location>
        <begin position="429"/>
        <end position="499"/>
    </location>
</feature>
<feature type="disulfide bond" evidence="1">
    <location>
        <begin position="432"/>
        <end position="501"/>
    </location>
</feature>
<feature type="disulfide bond" evidence="1">
    <location>
        <begin position="443"/>
        <end position="550"/>
    </location>
</feature>
<feature type="splice variant" id="VSP_028838" description="In isoform 2." evidence="8">
    <location>
        <begin position="86"/>
        <end position="148"/>
    </location>
</feature>
<feature type="sequence conflict" description="In Ref. 1; AAH68412." evidence="9" ref="1">
    <original>Q</original>
    <variation>R</variation>
    <location>
        <position position="235"/>
    </location>
</feature>
<feature type="sequence conflict" description="In Ref. 1; AAH68412." evidence="9" ref="1">
    <original>R</original>
    <variation>Q</variation>
    <location>
        <position position="414"/>
    </location>
</feature>